<gene>
    <name evidence="1" type="primary">rpsQ</name>
    <name type="ordered locus">ABC0159</name>
</gene>
<feature type="chain" id="PRO_0000233422" description="Small ribosomal subunit protein uS17">
    <location>
        <begin position="1"/>
        <end position="86"/>
    </location>
</feature>
<dbReference type="EMBL" id="AP006627">
    <property type="protein sequence ID" value="BAD62702.1"/>
    <property type="molecule type" value="Genomic_DNA"/>
</dbReference>
<dbReference type="RefSeq" id="WP_011245023.1">
    <property type="nucleotide sequence ID" value="NC_006582.1"/>
</dbReference>
<dbReference type="SMR" id="Q5WLQ3"/>
<dbReference type="STRING" id="66692.ABC0159"/>
<dbReference type="GeneID" id="86924195"/>
<dbReference type="KEGG" id="bcl:ABC0159"/>
<dbReference type="eggNOG" id="COG0186">
    <property type="taxonomic scope" value="Bacteria"/>
</dbReference>
<dbReference type="HOGENOM" id="CLU_073626_1_0_9"/>
<dbReference type="OrthoDB" id="9811714at2"/>
<dbReference type="Proteomes" id="UP000001168">
    <property type="component" value="Chromosome"/>
</dbReference>
<dbReference type="GO" id="GO:0022627">
    <property type="term" value="C:cytosolic small ribosomal subunit"/>
    <property type="evidence" value="ECO:0007669"/>
    <property type="project" value="TreeGrafter"/>
</dbReference>
<dbReference type="GO" id="GO:0019843">
    <property type="term" value="F:rRNA binding"/>
    <property type="evidence" value="ECO:0007669"/>
    <property type="project" value="UniProtKB-UniRule"/>
</dbReference>
<dbReference type="GO" id="GO:0003735">
    <property type="term" value="F:structural constituent of ribosome"/>
    <property type="evidence" value="ECO:0007669"/>
    <property type="project" value="InterPro"/>
</dbReference>
<dbReference type="GO" id="GO:0006412">
    <property type="term" value="P:translation"/>
    <property type="evidence" value="ECO:0007669"/>
    <property type="project" value="UniProtKB-UniRule"/>
</dbReference>
<dbReference type="CDD" id="cd00364">
    <property type="entry name" value="Ribosomal_uS17"/>
    <property type="match status" value="1"/>
</dbReference>
<dbReference type="FunFam" id="2.40.50.140:FF:000026">
    <property type="entry name" value="30S ribosomal protein S17"/>
    <property type="match status" value="1"/>
</dbReference>
<dbReference type="Gene3D" id="2.40.50.140">
    <property type="entry name" value="Nucleic acid-binding proteins"/>
    <property type="match status" value="1"/>
</dbReference>
<dbReference type="HAMAP" id="MF_01345_B">
    <property type="entry name" value="Ribosomal_uS17_B"/>
    <property type="match status" value="1"/>
</dbReference>
<dbReference type="InterPro" id="IPR012340">
    <property type="entry name" value="NA-bd_OB-fold"/>
</dbReference>
<dbReference type="InterPro" id="IPR000266">
    <property type="entry name" value="Ribosomal_uS17"/>
</dbReference>
<dbReference type="InterPro" id="IPR019984">
    <property type="entry name" value="Ribosomal_uS17_bact/chlr"/>
</dbReference>
<dbReference type="InterPro" id="IPR019979">
    <property type="entry name" value="Ribosomal_uS17_CS"/>
</dbReference>
<dbReference type="NCBIfam" id="NF004123">
    <property type="entry name" value="PRK05610.1"/>
    <property type="match status" value="1"/>
</dbReference>
<dbReference type="NCBIfam" id="TIGR03635">
    <property type="entry name" value="uS17_bact"/>
    <property type="match status" value="1"/>
</dbReference>
<dbReference type="PANTHER" id="PTHR10744">
    <property type="entry name" value="40S RIBOSOMAL PROTEIN S11 FAMILY MEMBER"/>
    <property type="match status" value="1"/>
</dbReference>
<dbReference type="PANTHER" id="PTHR10744:SF1">
    <property type="entry name" value="SMALL RIBOSOMAL SUBUNIT PROTEIN US17M"/>
    <property type="match status" value="1"/>
</dbReference>
<dbReference type="Pfam" id="PF00366">
    <property type="entry name" value="Ribosomal_S17"/>
    <property type="match status" value="1"/>
</dbReference>
<dbReference type="PRINTS" id="PR00973">
    <property type="entry name" value="RIBOSOMALS17"/>
</dbReference>
<dbReference type="SUPFAM" id="SSF50249">
    <property type="entry name" value="Nucleic acid-binding proteins"/>
    <property type="match status" value="1"/>
</dbReference>
<dbReference type="PROSITE" id="PS00056">
    <property type="entry name" value="RIBOSOMAL_S17"/>
    <property type="match status" value="1"/>
</dbReference>
<organism>
    <name type="scientific">Shouchella clausii (strain KSM-K16)</name>
    <name type="common">Alkalihalobacillus clausii</name>
    <dbReference type="NCBI Taxonomy" id="66692"/>
    <lineage>
        <taxon>Bacteria</taxon>
        <taxon>Bacillati</taxon>
        <taxon>Bacillota</taxon>
        <taxon>Bacilli</taxon>
        <taxon>Bacillales</taxon>
        <taxon>Bacillaceae</taxon>
        <taxon>Shouchella</taxon>
    </lineage>
</organism>
<proteinExistence type="inferred from homology"/>
<keyword id="KW-1185">Reference proteome</keyword>
<keyword id="KW-0687">Ribonucleoprotein</keyword>
<keyword id="KW-0689">Ribosomal protein</keyword>
<keyword id="KW-0694">RNA-binding</keyword>
<keyword id="KW-0699">rRNA-binding</keyword>
<comment type="function">
    <text evidence="1">One of the primary rRNA binding proteins, it binds specifically to the 5'-end of 16S ribosomal RNA.</text>
</comment>
<comment type="subunit">
    <text evidence="1">Part of the 30S ribosomal subunit.</text>
</comment>
<comment type="similarity">
    <text evidence="1">Belongs to the universal ribosomal protein uS17 family.</text>
</comment>
<reference key="1">
    <citation type="submission" date="2003-10" db="EMBL/GenBank/DDBJ databases">
        <title>The complete genome sequence of the alkaliphilic Bacillus clausii KSM-K16.</title>
        <authorList>
            <person name="Takaki Y."/>
            <person name="Kageyama Y."/>
            <person name="Shimamura S."/>
            <person name="Suzuki H."/>
            <person name="Nishi S."/>
            <person name="Hatada Y."/>
            <person name="Kawai S."/>
            <person name="Ito S."/>
            <person name="Horikoshi K."/>
        </authorList>
    </citation>
    <scope>NUCLEOTIDE SEQUENCE [LARGE SCALE GENOMIC DNA]</scope>
    <source>
        <strain>KSM-K16</strain>
    </source>
</reference>
<sequence>MDRNQRKVYQGRVVSDKMDKTITVLVETYKKDRLYGKRVKYSKKFKAHDEQNTAKVGDIVRIMETRPLSKDKRFRLVEIVEEAIII</sequence>
<name>RS17_SHOC1</name>
<evidence type="ECO:0000255" key="1">
    <source>
        <dbReference type="HAMAP-Rule" id="MF_01345"/>
    </source>
</evidence>
<evidence type="ECO:0000305" key="2"/>
<protein>
    <recommendedName>
        <fullName evidence="1">Small ribosomal subunit protein uS17</fullName>
    </recommendedName>
    <alternativeName>
        <fullName evidence="2">30S ribosomal protein S17</fullName>
    </alternativeName>
</protein>
<accession>Q5WLQ3</accession>